<keyword id="KW-0002">3D-structure</keyword>
<keyword id="KW-0210">Decarboxylase</keyword>
<keyword id="KW-0456">Lyase</keyword>
<keyword id="KW-0576">Peroxisome</keyword>
<keyword id="KW-0659">Purine metabolism</keyword>
<keyword id="KW-1185">Reference proteome</keyword>
<organism>
    <name type="scientific">Danio rerio</name>
    <name type="common">Zebrafish</name>
    <name type="synonym">Brachydanio rerio</name>
    <dbReference type="NCBI Taxonomy" id="7955"/>
    <lineage>
        <taxon>Eukaryota</taxon>
        <taxon>Metazoa</taxon>
        <taxon>Chordata</taxon>
        <taxon>Craniata</taxon>
        <taxon>Vertebrata</taxon>
        <taxon>Euteleostomi</taxon>
        <taxon>Actinopterygii</taxon>
        <taxon>Neopterygii</taxon>
        <taxon>Teleostei</taxon>
        <taxon>Ostariophysi</taxon>
        <taxon>Cypriniformes</taxon>
        <taxon>Danionidae</taxon>
        <taxon>Danioninae</taxon>
        <taxon>Danio</taxon>
    </lineage>
</organism>
<feature type="chain" id="PRO_0000315243" description="2-oxo-4-hydroxy-4-carboxy-5-ureidoimidazoline decarboxylase">
    <location>
        <begin position="1"/>
        <end position="174"/>
    </location>
</feature>
<feature type="short sequence motif" description="Microbody targeting signal" evidence="2">
    <location>
        <begin position="172"/>
        <end position="174"/>
    </location>
</feature>
<feature type="active site" description="Proton donor" evidence="1">
    <location>
        <position position="67"/>
    </location>
</feature>
<feature type="binding site">
    <location>
        <position position="68"/>
    </location>
    <ligand>
        <name>substrate</name>
    </ligand>
</feature>
<feature type="binding site">
    <location>
        <begin position="84"/>
        <end position="88"/>
    </location>
    <ligand>
        <name>substrate</name>
    </ligand>
</feature>
<feature type="binding site">
    <location>
        <begin position="119"/>
        <end position="123"/>
    </location>
    <ligand>
        <name>substrate</name>
    </ligand>
</feature>
<feature type="mutagenesis site" description="Loss of activity." evidence="3">
    <original>H</original>
    <variation>N</variation>
    <location>
        <position position="67"/>
    </location>
</feature>
<feature type="mutagenesis site" description="Loss of activity." evidence="3">
    <original>E</original>
    <variation>Q</variation>
    <location>
        <position position="87"/>
    </location>
</feature>
<feature type="mutagenesis site" description="Loss of activity." evidence="3">
    <original>R</original>
    <variation>Q</variation>
    <location>
        <position position="161"/>
    </location>
</feature>
<feature type="helix" evidence="5">
    <location>
        <begin position="3"/>
        <end position="7"/>
    </location>
</feature>
<feature type="helix" evidence="5">
    <location>
        <begin position="11"/>
        <end position="18"/>
    </location>
</feature>
<feature type="helix" evidence="5">
    <location>
        <begin position="26"/>
        <end position="32"/>
    </location>
</feature>
<feature type="helix" evidence="5">
    <location>
        <begin position="33"/>
        <end position="35"/>
    </location>
</feature>
<feature type="helix" evidence="5">
    <location>
        <begin position="41"/>
        <end position="54"/>
    </location>
</feature>
<feature type="helix" evidence="5">
    <location>
        <begin position="57"/>
        <end position="65"/>
    </location>
</feature>
<feature type="helix" evidence="5">
    <location>
        <begin position="73"/>
        <end position="77"/>
    </location>
</feature>
<feature type="helix" evidence="5">
    <location>
        <begin position="82"/>
        <end position="90"/>
    </location>
</feature>
<feature type="turn" evidence="6">
    <location>
        <begin position="91"/>
        <end position="94"/>
    </location>
</feature>
<feature type="helix" evidence="5">
    <location>
        <begin position="98"/>
        <end position="115"/>
    </location>
</feature>
<feature type="helix" evidence="5">
    <location>
        <begin position="123"/>
        <end position="125"/>
    </location>
</feature>
<feature type="helix" evidence="5">
    <location>
        <begin position="128"/>
        <end position="138"/>
    </location>
</feature>
<feature type="helix" evidence="5">
    <location>
        <begin position="143"/>
        <end position="165"/>
    </location>
</feature>
<protein>
    <recommendedName>
        <fullName>2-oxo-4-hydroxy-4-carboxy-5-ureidoimidazoline decarboxylase</fullName>
        <shortName>OHCU decarboxylase</shortName>
        <ecNumber>4.1.1.97</ecNumber>
    </recommendedName>
    <alternativeName>
        <fullName>Parahox neighbor</fullName>
    </alternativeName>
    <alternativeName>
        <fullName>Ureidoimidazoline (2-oxo-4-hydroxy-4-carboxy-5-) decarboxylase</fullName>
    </alternativeName>
</protein>
<accession>A1L259</accession>
<gene>
    <name type="primary">urad</name>
    <name type="synonym">prhoxnb</name>
    <name type="ORF">zgc:158663</name>
</gene>
<proteinExistence type="evidence at protein level"/>
<name>URAD_DANRE</name>
<dbReference type="EC" id="4.1.1.97"/>
<dbReference type="EMBL" id="EF197726">
    <property type="protein sequence ID" value="ABP04232.1"/>
    <property type="molecule type" value="mRNA"/>
</dbReference>
<dbReference type="EMBL" id="BC129362">
    <property type="protein sequence ID" value="AAI29363.1"/>
    <property type="molecule type" value="mRNA"/>
</dbReference>
<dbReference type="RefSeq" id="NP_001073641.1">
    <property type="nucleotide sequence ID" value="NM_001080172.1"/>
</dbReference>
<dbReference type="PDB" id="2O70">
    <property type="method" value="X-ray"/>
    <property type="resolution" value="1.80 A"/>
    <property type="chains" value="A/B/C/D/E/F=1-174"/>
</dbReference>
<dbReference type="PDB" id="2O73">
    <property type="method" value="X-ray"/>
    <property type="resolution" value="1.80 A"/>
    <property type="chains" value="A/B/C/D/E/F=1-174"/>
</dbReference>
<dbReference type="PDB" id="2O74">
    <property type="method" value="X-ray"/>
    <property type="resolution" value="1.80 A"/>
    <property type="chains" value="A/B/C/D/E/F=1-174"/>
</dbReference>
<dbReference type="PDBsum" id="2O70"/>
<dbReference type="PDBsum" id="2O73"/>
<dbReference type="PDBsum" id="2O74"/>
<dbReference type="SMR" id="A1L259"/>
<dbReference type="FunCoup" id="A1L259">
    <property type="interactions" value="35"/>
</dbReference>
<dbReference type="STRING" id="7955.ENSDARP00000096695"/>
<dbReference type="PaxDb" id="7955-ENSDARP00000096695"/>
<dbReference type="PeptideAtlas" id="A1L259"/>
<dbReference type="Ensembl" id="ENSDART00000105917">
    <property type="protein sequence ID" value="ENSDARP00000096695"/>
    <property type="gene ID" value="ENSDARG00000071579"/>
</dbReference>
<dbReference type="Ensembl" id="ENSDART00000184990">
    <property type="protein sequence ID" value="ENSDARP00000148135"/>
    <property type="gene ID" value="ENSDARG00000115541"/>
</dbReference>
<dbReference type="GeneID" id="557735"/>
<dbReference type="KEGG" id="dre:557735"/>
<dbReference type="AGR" id="ZFIN:ZDB-GENE-070112-472"/>
<dbReference type="CTD" id="646625"/>
<dbReference type="ZFIN" id="ZDB-GENE-070112-472">
    <property type="gene designation" value="urad"/>
</dbReference>
<dbReference type="eggNOG" id="KOG0848">
    <property type="taxonomic scope" value="Eukaryota"/>
</dbReference>
<dbReference type="HOGENOM" id="CLU_092522_1_0_1"/>
<dbReference type="InParanoid" id="A1L259"/>
<dbReference type="OMA" id="RCQNERA"/>
<dbReference type="OrthoDB" id="9970124at2759"/>
<dbReference type="PhylomeDB" id="A1L259"/>
<dbReference type="TreeFam" id="TF323276"/>
<dbReference type="BRENDA" id="4.1.1.97">
    <property type="organism ID" value="928"/>
</dbReference>
<dbReference type="UniPathway" id="UPA00394">
    <property type="reaction ID" value="UER00652"/>
</dbReference>
<dbReference type="EvolutionaryTrace" id="A1L259"/>
<dbReference type="PRO" id="PR:A1L259"/>
<dbReference type="Proteomes" id="UP000000437">
    <property type="component" value="Alternate scaffold 24"/>
</dbReference>
<dbReference type="Proteomes" id="UP000000437">
    <property type="component" value="Chromosome 24"/>
</dbReference>
<dbReference type="Bgee" id="ENSDARG00000071579">
    <property type="expression patterns" value="Expressed in liver and 7 other cell types or tissues"/>
</dbReference>
<dbReference type="GO" id="GO:0005777">
    <property type="term" value="C:peroxisome"/>
    <property type="evidence" value="ECO:0000318"/>
    <property type="project" value="GO_Central"/>
</dbReference>
<dbReference type="GO" id="GO:0051997">
    <property type="term" value="F:2-oxo-4-hydroxy-4-carboxy-5-ureidoimidazoline decarboxylase activity"/>
    <property type="evidence" value="ECO:0000314"/>
    <property type="project" value="ZFIN"/>
</dbReference>
<dbReference type="GO" id="GO:0000255">
    <property type="term" value="P:allantoin metabolic process"/>
    <property type="evidence" value="ECO:0007669"/>
    <property type="project" value="InterPro"/>
</dbReference>
<dbReference type="GO" id="GO:0006144">
    <property type="term" value="P:purine nucleobase metabolic process"/>
    <property type="evidence" value="ECO:0007669"/>
    <property type="project" value="UniProtKB-KW"/>
</dbReference>
<dbReference type="GO" id="GO:0019628">
    <property type="term" value="P:urate catabolic process"/>
    <property type="evidence" value="ECO:0000318"/>
    <property type="project" value="GO_Central"/>
</dbReference>
<dbReference type="FunFam" id="1.10.3330.10:FF:000001">
    <property type="entry name" value="2-oxo-4-hydroxy-4-carboxy-5-ureidoimidazoline decarboxylase"/>
    <property type="match status" value="1"/>
</dbReference>
<dbReference type="Gene3D" id="1.10.3330.10">
    <property type="entry name" value="Oxo-4-hydroxy-4-carboxy-5-ureidoimidazoline decarboxylase"/>
    <property type="match status" value="1"/>
</dbReference>
<dbReference type="InterPro" id="IPR018020">
    <property type="entry name" value="OHCU_decarboxylase"/>
</dbReference>
<dbReference type="InterPro" id="IPR017580">
    <property type="entry name" value="OHCU_decarboxylase-1"/>
</dbReference>
<dbReference type="InterPro" id="IPR036778">
    <property type="entry name" value="OHCU_decarboxylase_sf"/>
</dbReference>
<dbReference type="NCBIfam" id="TIGR03164">
    <property type="entry name" value="UHCUDC"/>
    <property type="match status" value="1"/>
</dbReference>
<dbReference type="PANTHER" id="PTHR43466">
    <property type="entry name" value="2-OXO-4-HYDROXY-4-CARBOXY-5-UREIDOIMIDAZOLINE DECARBOXYLASE-RELATED"/>
    <property type="match status" value="1"/>
</dbReference>
<dbReference type="PANTHER" id="PTHR43466:SF1">
    <property type="entry name" value="2-OXO-4-HYDROXY-4-CARBOXY-5-UREIDOIMIDAZOLINE DECARBOXYLASE-RELATED"/>
    <property type="match status" value="1"/>
</dbReference>
<dbReference type="Pfam" id="PF09349">
    <property type="entry name" value="OHCU_decarbox"/>
    <property type="match status" value="1"/>
</dbReference>
<dbReference type="SUPFAM" id="SSF158694">
    <property type="entry name" value="UraD-Like"/>
    <property type="match status" value="1"/>
</dbReference>
<sequence>MDINVVNALAYEDFVKLFGNVVEKCPLISAAIWSYRPFKDLADIEARISEFIHSLPDSGKEGILRCHPDLAGRDLQSGTLTPESQEEQSQAGMTTLDSAEIVHMYRLNSEYKERFGFPFVICARLNNKADIVRQLSERLKNRRTAELECAIEEVKKICSLRLHSIVLSDIQTKL</sequence>
<comment type="function">
    <text evidence="3">Catalyzes the stereoselective decarboxylation of 2-oxo-4-hydroxy-4-carboxy-5-ureidoimidazoline (OHCU) to (S)-allantoin.</text>
</comment>
<comment type="catalytic activity">
    <reaction>
        <text>5-hydroxy-2-oxo-4-ureido-2,5-dihydro-1H-imidazole-5-carboxylate + H(+) = (S)-allantoin + CO2</text>
        <dbReference type="Rhea" id="RHEA:26301"/>
        <dbReference type="ChEBI" id="CHEBI:15378"/>
        <dbReference type="ChEBI" id="CHEBI:15678"/>
        <dbReference type="ChEBI" id="CHEBI:16526"/>
        <dbReference type="ChEBI" id="CHEBI:58639"/>
        <dbReference type="EC" id="4.1.1.97"/>
    </reaction>
</comment>
<comment type="pathway">
    <text>Purine metabolism; urate degradation; (S)-allantoin from urate: step 3/3.</text>
</comment>
<comment type="subunit">
    <text evidence="3">Homodimer.</text>
</comment>
<comment type="subcellular location">
    <subcellularLocation>
        <location evidence="4">Peroxisome</location>
    </subcellularLocation>
</comment>
<comment type="similarity">
    <text evidence="4">Belongs to the OHCU decarboxylase family.</text>
</comment>
<evidence type="ECO:0000250" key="1"/>
<evidence type="ECO:0000255" key="2"/>
<evidence type="ECO:0000269" key="3">
    <source>
    </source>
</evidence>
<evidence type="ECO:0000305" key="4"/>
<evidence type="ECO:0007829" key="5">
    <source>
        <dbReference type="PDB" id="2O70"/>
    </source>
</evidence>
<evidence type="ECO:0007829" key="6">
    <source>
        <dbReference type="PDB" id="2O73"/>
    </source>
</evidence>
<reference key="1">
    <citation type="journal article" date="2007" name="J. Biol. Chem.">
        <title>The structure of 2-oxo-4-hydroxy-4-carboxy-5-ureidoimidazoline decarboxylase provides insights into the mechanism of uric acid degradation.</title>
        <authorList>
            <person name="Cendron L."/>
            <person name="Berni R."/>
            <person name="Folli C."/>
            <person name="Ramazzina I."/>
            <person name="Percudani R."/>
            <person name="Zanotti G."/>
        </authorList>
    </citation>
    <scope>NUCLEOTIDE SEQUENCE [MRNA]</scope>
    <scope>X-RAY CRYSTALLOGRAPHY (1.8 ANGSTROMS) IN COMPLEXES WITH SUBSTRATE ANALOGS</scope>
    <scope>FUNCTION</scope>
    <scope>MUTAGENESIS OF HIS-67; GLU-87 AND ARG-161</scope>
    <scope>SUBUNIT</scope>
</reference>
<reference key="2">
    <citation type="submission" date="2006-12" db="EMBL/GenBank/DDBJ databases">
        <authorList>
            <consortium name="NIH - Zebrafish Gene Collection (ZGC) project"/>
        </authorList>
    </citation>
    <scope>NUCLEOTIDE SEQUENCE [LARGE SCALE MRNA]</scope>
    <source>
        <tissue>Liver</tissue>
    </source>
</reference>